<proteinExistence type="inferred from homology"/>
<comment type="function">
    <text evidence="1">Zinc phosphodiesterase, which has both exoribonuclease and endoribonuclease activities.</text>
</comment>
<comment type="cofactor">
    <cofactor evidence="1">
        <name>Zn(2+)</name>
        <dbReference type="ChEBI" id="CHEBI:29105"/>
    </cofactor>
    <text evidence="1">Binds 2 Zn(2+) ions.</text>
</comment>
<comment type="subunit">
    <text evidence="1">Homodimer.</text>
</comment>
<comment type="similarity">
    <text evidence="1">Belongs to the RNase Z family. RNase BN subfamily.</text>
</comment>
<comment type="sequence caution" evidence="2">
    <conflict type="erroneous initiation">
        <sequence resource="EMBL-CDS" id="AAX66219"/>
    </conflict>
    <text>Extended N-terminus.</text>
</comment>
<name>RBN_SALCH</name>
<sequence length="305" mass="32877">MELIFLGTSAGVPTRSRNVTAILLHLQHPTQPGVWLFDCGEGTQHQMLNTAFHPGKLERIFISHLHGDHLFGLPGLLCSRSMAGNPHPLTVYGPQGVREFIATTLRLSGSWTDFPLQIEEISAGDILDDGLRKVTAFRLEHPLECYGYRVVEHDKPGALNARALKAAGVTPGPLFQALKAGKTVTLADGRQINGADYLAPAVAGKSVAIFGDTAPCEAALALAQGVDVMVHETTLDASMEEKANARGHSSTRQTATLAREAAVGRLIMTHISSRYDDKGCQRLLAECRAIFPATELAYDFSVFPV</sequence>
<keyword id="KW-0255">Endonuclease</keyword>
<keyword id="KW-0269">Exonuclease</keyword>
<keyword id="KW-0378">Hydrolase</keyword>
<keyword id="KW-0479">Metal-binding</keyword>
<keyword id="KW-0540">Nuclease</keyword>
<keyword id="KW-0819">tRNA processing</keyword>
<keyword id="KW-0862">Zinc</keyword>
<reference key="1">
    <citation type="journal article" date="2005" name="Nucleic Acids Res.">
        <title>The genome sequence of Salmonella enterica serovar Choleraesuis, a highly invasive and resistant zoonotic pathogen.</title>
        <authorList>
            <person name="Chiu C.-H."/>
            <person name="Tang P."/>
            <person name="Chu C."/>
            <person name="Hu S."/>
            <person name="Bao Q."/>
            <person name="Yu J."/>
            <person name="Chou Y.-Y."/>
            <person name="Wang H.-S."/>
            <person name="Lee Y.-S."/>
        </authorList>
    </citation>
    <scope>NUCLEOTIDE SEQUENCE [LARGE SCALE GENOMIC DNA]</scope>
    <source>
        <strain>SC-B67</strain>
    </source>
</reference>
<accession>Q57M43</accession>
<protein>
    <recommendedName>
        <fullName evidence="1">Ribonuclease BN</fullName>
        <shortName evidence="1">RNase BN</shortName>
        <ecNumber evidence="1">3.1.-.-</ecNumber>
    </recommendedName>
    <alternativeName>
        <fullName evidence="1">Ribonuclease Z homolog</fullName>
        <shortName evidence="1">RNase Z homolog</shortName>
    </alternativeName>
</protein>
<dbReference type="EC" id="3.1.-.-" evidence="1"/>
<dbReference type="EMBL" id="AE017220">
    <property type="protein sequence ID" value="AAX66219.1"/>
    <property type="status" value="ALT_INIT"/>
    <property type="molecule type" value="Genomic_DNA"/>
</dbReference>
<dbReference type="RefSeq" id="WP_000419093.1">
    <property type="nucleotide sequence ID" value="NC_006905.1"/>
</dbReference>
<dbReference type="SMR" id="Q57M43"/>
<dbReference type="KEGG" id="sec:SCH_2313"/>
<dbReference type="HOGENOM" id="CLU_031317_2_0_6"/>
<dbReference type="Proteomes" id="UP000000538">
    <property type="component" value="Chromosome"/>
</dbReference>
<dbReference type="GO" id="GO:0042781">
    <property type="term" value="F:3'-tRNA processing endoribonuclease activity"/>
    <property type="evidence" value="ECO:0007669"/>
    <property type="project" value="TreeGrafter"/>
</dbReference>
<dbReference type="GO" id="GO:0004527">
    <property type="term" value="F:exonuclease activity"/>
    <property type="evidence" value="ECO:0007669"/>
    <property type="project" value="UniProtKB-UniRule"/>
</dbReference>
<dbReference type="GO" id="GO:0008270">
    <property type="term" value="F:zinc ion binding"/>
    <property type="evidence" value="ECO:0007669"/>
    <property type="project" value="UniProtKB-UniRule"/>
</dbReference>
<dbReference type="CDD" id="cd07717">
    <property type="entry name" value="RNaseZ_ZiPD-like_MBL-fold"/>
    <property type="match status" value="1"/>
</dbReference>
<dbReference type="FunFam" id="3.60.15.10:FF:000002">
    <property type="entry name" value="Ribonuclease Z"/>
    <property type="match status" value="1"/>
</dbReference>
<dbReference type="Gene3D" id="3.60.15.10">
    <property type="entry name" value="Ribonuclease Z/Hydroxyacylglutathione hydrolase-like"/>
    <property type="match status" value="1"/>
</dbReference>
<dbReference type="HAMAP" id="MF_01818">
    <property type="entry name" value="RNase_Z_BN"/>
    <property type="match status" value="1"/>
</dbReference>
<dbReference type="InterPro" id="IPR001279">
    <property type="entry name" value="Metallo-B-lactamas"/>
</dbReference>
<dbReference type="InterPro" id="IPR036866">
    <property type="entry name" value="RibonucZ/Hydroxyglut_hydro"/>
</dbReference>
<dbReference type="InterPro" id="IPR013469">
    <property type="entry name" value="Rnase_BN"/>
</dbReference>
<dbReference type="InterPro" id="IPR013471">
    <property type="entry name" value="RNase_Z/BN"/>
</dbReference>
<dbReference type="NCBIfam" id="NF000800">
    <property type="entry name" value="PRK00055.1-1"/>
    <property type="match status" value="1"/>
</dbReference>
<dbReference type="NCBIfam" id="NF000801">
    <property type="entry name" value="PRK00055.1-3"/>
    <property type="match status" value="1"/>
</dbReference>
<dbReference type="NCBIfam" id="TIGR02651">
    <property type="entry name" value="RNase_Z"/>
    <property type="match status" value="1"/>
</dbReference>
<dbReference type="NCBIfam" id="TIGR02649">
    <property type="entry name" value="true_RNase_BN"/>
    <property type="match status" value="1"/>
</dbReference>
<dbReference type="PANTHER" id="PTHR46018">
    <property type="entry name" value="ZINC PHOSPHODIESTERASE ELAC PROTEIN 1"/>
    <property type="match status" value="1"/>
</dbReference>
<dbReference type="PANTHER" id="PTHR46018:SF2">
    <property type="entry name" value="ZINC PHOSPHODIESTERASE ELAC PROTEIN 1"/>
    <property type="match status" value="1"/>
</dbReference>
<dbReference type="Pfam" id="PF12706">
    <property type="entry name" value="Lactamase_B_2"/>
    <property type="match status" value="2"/>
</dbReference>
<dbReference type="SUPFAM" id="SSF56281">
    <property type="entry name" value="Metallo-hydrolase/oxidoreductase"/>
    <property type="match status" value="1"/>
</dbReference>
<evidence type="ECO:0000255" key="1">
    <source>
        <dbReference type="HAMAP-Rule" id="MF_01818"/>
    </source>
</evidence>
<evidence type="ECO:0000305" key="2"/>
<gene>
    <name evidence="1" type="primary">rbn</name>
    <name type="synonym">rnz</name>
    <name type="ordered locus">SCH_2313</name>
</gene>
<organism>
    <name type="scientific">Salmonella choleraesuis (strain SC-B67)</name>
    <dbReference type="NCBI Taxonomy" id="321314"/>
    <lineage>
        <taxon>Bacteria</taxon>
        <taxon>Pseudomonadati</taxon>
        <taxon>Pseudomonadota</taxon>
        <taxon>Gammaproteobacteria</taxon>
        <taxon>Enterobacterales</taxon>
        <taxon>Enterobacteriaceae</taxon>
        <taxon>Salmonella</taxon>
    </lineage>
</organism>
<feature type="chain" id="PRO_0000155888" description="Ribonuclease BN">
    <location>
        <begin position="1"/>
        <end position="305"/>
    </location>
</feature>
<feature type="active site" description="Proton acceptor" evidence="1">
    <location>
        <position position="68"/>
    </location>
</feature>
<feature type="binding site" evidence="1">
    <location>
        <position position="64"/>
    </location>
    <ligand>
        <name>Zn(2+)</name>
        <dbReference type="ChEBI" id="CHEBI:29105"/>
        <label>1</label>
        <note>catalytic</note>
    </ligand>
</feature>
<feature type="binding site" evidence="1">
    <location>
        <position position="66"/>
    </location>
    <ligand>
        <name>Zn(2+)</name>
        <dbReference type="ChEBI" id="CHEBI:29105"/>
        <label>1</label>
        <note>catalytic</note>
    </ligand>
</feature>
<feature type="binding site" evidence="1">
    <location>
        <position position="68"/>
    </location>
    <ligand>
        <name>Zn(2+)</name>
        <dbReference type="ChEBI" id="CHEBI:29105"/>
        <label>2</label>
        <note>catalytic</note>
    </ligand>
</feature>
<feature type="binding site" evidence="1">
    <location>
        <position position="69"/>
    </location>
    <ligand>
        <name>Zn(2+)</name>
        <dbReference type="ChEBI" id="CHEBI:29105"/>
        <label>2</label>
        <note>catalytic</note>
    </ligand>
</feature>
<feature type="binding site" evidence="1">
    <location>
        <position position="141"/>
    </location>
    <ligand>
        <name>Zn(2+)</name>
        <dbReference type="ChEBI" id="CHEBI:29105"/>
        <label>1</label>
        <note>catalytic</note>
    </ligand>
</feature>
<feature type="binding site" evidence="1">
    <location>
        <position position="212"/>
    </location>
    <ligand>
        <name>Zn(2+)</name>
        <dbReference type="ChEBI" id="CHEBI:29105"/>
        <label>1</label>
        <note>catalytic</note>
    </ligand>
</feature>
<feature type="binding site" evidence="1">
    <location>
        <position position="212"/>
    </location>
    <ligand>
        <name>Zn(2+)</name>
        <dbReference type="ChEBI" id="CHEBI:29105"/>
        <label>2</label>
        <note>catalytic</note>
    </ligand>
</feature>
<feature type="binding site" evidence="1">
    <location>
        <position position="270"/>
    </location>
    <ligand>
        <name>Zn(2+)</name>
        <dbReference type="ChEBI" id="CHEBI:29105"/>
        <label>2</label>
        <note>catalytic</note>
    </ligand>
</feature>